<feature type="chain" id="PRO_0000354098" description="Catalase-peroxidase">
    <location>
        <begin position="1"/>
        <end position="760"/>
    </location>
</feature>
<feature type="region of interest" description="Disordered" evidence="2">
    <location>
        <begin position="1"/>
        <end position="24"/>
    </location>
</feature>
<feature type="active site" description="Proton acceptor" evidence="1">
    <location>
        <position position="97"/>
    </location>
</feature>
<feature type="binding site" description="axial binding residue" evidence="1">
    <location>
        <position position="283"/>
    </location>
    <ligand>
        <name>heme b</name>
        <dbReference type="ChEBI" id="CHEBI:60344"/>
    </ligand>
    <ligandPart>
        <name>Fe</name>
        <dbReference type="ChEBI" id="CHEBI:18248"/>
    </ligandPart>
</feature>
<feature type="site" description="Transition state stabilizer" evidence="1">
    <location>
        <position position="93"/>
    </location>
</feature>
<feature type="cross-link" description="Tryptophyl-tyrosyl-methioninium (Trp-Tyr) (with M-268)" evidence="1">
    <location>
        <begin position="96"/>
        <end position="242"/>
    </location>
</feature>
<feature type="cross-link" description="Tryptophyl-tyrosyl-methioninium (Tyr-Met) (with W-96)" evidence="1">
    <location>
        <begin position="242"/>
        <end position="268"/>
    </location>
</feature>
<evidence type="ECO:0000255" key="1">
    <source>
        <dbReference type="HAMAP-Rule" id="MF_03108"/>
    </source>
</evidence>
<evidence type="ECO:0000256" key="2">
    <source>
        <dbReference type="SAM" id="MobiDB-lite"/>
    </source>
</evidence>
<organism>
    <name type="scientific">Aspergillus clavatus (strain ATCC 1007 / CBS 513.65 / DSM 816 / NCTC 3887 / NRRL 1 / QM 1276 / 107)</name>
    <dbReference type="NCBI Taxonomy" id="344612"/>
    <lineage>
        <taxon>Eukaryota</taxon>
        <taxon>Fungi</taxon>
        <taxon>Dikarya</taxon>
        <taxon>Ascomycota</taxon>
        <taxon>Pezizomycotina</taxon>
        <taxon>Eurotiomycetes</taxon>
        <taxon>Eurotiomycetidae</taxon>
        <taxon>Eurotiales</taxon>
        <taxon>Aspergillaceae</taxon>
        <taxon>Aspergillus</taxon>
        <taxon>Aspergillus subgen. Fumigati</taxon>
    </lineage>
</organism>
<gene>
    <name evidence="1" type="primary">katG</name>
    <name type="ORF">ACLA_044200</name>
</gene>
<reference key="1">
    <citation type="journal article" date="2008" name="PLoS Genet.">
        <title>Genomic islands in the pathogenic filamentous fungus Aspergillus fumigatus.</title>
        <authorList>
            <person name="Fedorova N.D."/>
            <person name="Khaldi N."/>
            <person name="Joardar V.S."/>
            <person name="Maiti R."/>
            <person name="Amedeo P."/>
            <person name="Anderson M.J."/>
            <person name="Crabtree J."/>
            <person name="Silva J.C."/>
            <person name="Badger J.H."/>
            <person name="Albarraq A."/>
            <person name="Angiuoli S."/>
            <person name="Bussey H."/>
            <person name="Bowyer P."/>
            <person name="Cotty P.J."/>
            <person name="Dyer P.S."/>
            <person name="Egan A."/>
            <person name="Galens K."/>
            <person name="Fraser-Liggett C.M."/>
            <person name="Haas B.J."/>
            <person name="Inman J.M."/>
            <person name="Kent R."/>
            <person name="Lemieux S."/>
            <person name="Malavazi I."/>
            <person name="Orvis J."/>
            <person name="Roemer T."/>
            <person name="Ronning C.M."/>
            <person name="Sundaram J.P."/>
            <person name="Sutton G."/>
            <person name="Turner G."/>
            <person name="Venter J.C."/>
            <person name="White O.R."/>
            <person name="Whitty B.R."/>
            <person name="Youngman P."/>
            <person name="Wolfe K.H."/>
            <person name="Goldman G.H."/>
            <person name="Wortman J.R."/>
            <person name="Jiang B."/>
            <person name="Denning D.W."/>
            <person name="Nierman W.C."/>
        </authorList>
    </citation>
    <scope>NUCLEOTIDE SEQUENCE [LARGE SCALE GENOMIC DNA]</scope>
    <source>
        <strain>ATCC 1007 / CBS 513.65 / DSM 816 / NCTC 3887 / NRRL 1 / QM 1276 / 107</strain>
    </source>
</reference>
<name>KATG_ASPCL</name>
<sequence length="760" mass="83843">MAESKCPFKSQGSRSNVAGGGTRNTDWWPEQLKLNILRQHTTVTNPLGADFDYAAAFNTLDYDALKKDLTALMTDSQEWWPADFGHYGGLFIRMAWHSAGTYRVFDGRGGAGQGQQRFAPLNSWPDNVSLDKARRLLWPIKQKYGDKISWADLMILTGNVALESMGFKTFGFAGGRADTWEADESAYWGRETTWLGNDARYEKGFSGSDKQGTVIADEASHKTTHSRELENPLAAAHMGLIYVNPEGPDGNPDPVAAAHDIRVTFGRMAMNDEETVALIAGGHTFGKTHGAAPADNVGKEPEAAGLEAQGLGWQNSHGSGKGPDTITSGLEVTWTKTPTKWSNQFLEYLFKFDWELTKSPAGAHQWVAKNADDIIPDAYDAFKKHKPTMLTTDLSLRFDPAYEKISRRFLENPDQFADAFARAWFKLTHRDMGPRARYLGPEVPGEVLLWQDPIPAVNHALIDTVDTAALKRDVLATGVNPSKFISTAWAAASTFRGSDKRGGANGARIRFAPQRSWEVNNQPWLQESLSALEGVQSRFNASRPDRKQVSLADLIVLAGCAAVEQAAHDAGFPVRVPFTPGRMDASQDETDVESFSHMEPIADGFRNYAKPYVHGRAEHYLVDKAQLLNLSAPEMTVLVGGLRVLNTNYDGSAHGVFTSRPGVLSNDFFVNLLDMNTAWQAGHNGEIFEGADRKSGAKKWTATRADLVFGSHAELRAVAEVYASADGQRKFVNDFVAAWNKVMNLDRFDLQGKQFIYPRL</sequence>
<comment type="function">
    <text evidence="1">Bifunctional enzyme with both catalase and broad-spectrum peroxidase activity.</text>
</comment>
<comment type="catalytic activity">
    <reaction evidence="1">
        <text>H2O2 + AH2 = A + 2 H2O</text>
        <dbReference type="Rhea" id="RHEA:30275"/>
        <dbReference type="ChEBI" id="CHEBI:13193"/>
        <dbReference type="ChEBI" id="CHEBI:15377"/>
        <dbReference type="ChEBI" id="CHEBI:16240"/>
        <dbReference type="ChEBI" id="CHEBI:17499"/>
        <dbReference type="EC" id="1.11.1.21"/>
    </reaction>
</comment>
<comment type="catalytic activity">
    <reaction evidence="1">
        <text>2 H2O2 = O2 + 2 H2O</text>
        <dbReference type="Rhea" id="RHEA:20309"/>
        <dbReference type="ChEBI" id="CHEBI:15377"/>
        <dbReference type="ChEBI" id="CHEBI:15379"/>
        <dbReference type="ChEBI" id="CHEBI:16240"/>
        <dbReference type="EC" id="1.11.1.21"/>
    </reaction>
</comment>
<comment type="cofactor">
    <cofactor evidence="1">
        <name>heme b</name>
        <dbReference type="ChEBI" id="CHEBI:60344"/>
    </cofactor>
    <text evidence="1">Binds 1 heme b (iron(II)-protoporphyrin IX) group per monomer.</text>
</comment>
<comment type="subunit">
    <text evidence="1">Homodimer or homotetramer.</text>
</comment>
<comment type="subcellular location">
    <subcellularLocation>
        <location evidence="1">Cytoplasm</location>
    </subcellularLocation>
</comment>
<comment type="PTM">
    <text evidence="1">Formation of the three residue Trp-Tyr-Met cross-link is important for the catalase, but not the peroxidase activity of the enzyme.</text>
</comment>
<comment type="similarity">
    <text evidence="1">Belongs to the peroxidase family. Peroxidase/catalase subfamily.</text>
</comment>
<keyword id="KW-0963">Cytoplasm</keyword>
<keyword id="KW-0349">Heme</keyword>
<keyword id="KW-0376">Hydrogen peroxide</keyword>
<keyword id="KW-0408">Iron</keyword>
<keyword id="KW-0479">Metal-binding</keyword>
<keyword id="KW-0560">Oxidoreductase</keyword>
<keyword id="KW-0575">Peroxidase</keyword>
<keyword id="KW-1185">Reference proteome</keyword>
<proteinExistence type="inferred from homology"/>
<dbReference type="EC" id="1.11.1.21" evidence="1"/>
<dbReference type="EMBL" id="DS027046">
    <property type="protein sequence ID" value="EAW13700.1"/>
    <property type="molecule type" value="Genomic_DNA"/>
</dbReference>
<dbReference type="RefSeq" id="XP_001275126.1">
    <property type="nucleotide sequence ID" value="XM_001275125.1"/>
</dbReference>
<dbReference type="SMR" id="A1C8R3"/>
<dbReference type="STRING" id="344612.A1C8R3"/>
<dbReference type="EnsemblFungi" id="EAW13700">
    <property type="protein sequence ID" value="EAW13700"/>
    <property type="gene ID" value="ACLA_044200"/>
</dbReference>
<dbReference type="GeneID" id="4707337"/>
<dbReference type="KEGG" id="act:ACLA_044200"/>
<dbReference type="VEuPathDB" id="FungiDB:ACLA_044200"/>
<dbReference type="eggNOG" id="ENOG502QTDY">
    <property type="taxonomic scope" value="Eukaryota"/>
</dbReference>
<dbReference type="HOGENOM" id="CLU_025424_2_0_1"/>
<dbReference type="OMA" id="GPETTWL"/>
<dbReference type="OrthoDB" id="407695at2759"/>
<dbReference type="Proteomes" id="UP000006701">
    <property type="component" value="Unassembled WGS sequence"/>
</dbReference>
<dbReference type="GO" id="GO:0005829">
    <property type="term" value="C:cytosol"/>
    <property type="evidence" value="ECO:0007669"/>
    <property type="project" value="TreeGrafter"/>
</dbReference>
<dbReference type="GO" id="GO:0004096">
    <property type="term" value="F:catalase activity"/>
    <property type="evidence" value="ECO:0007669"/>
    <property type="project" value="UniProtKB-UniRule"/>
</dbReference>
<dbReference type="GO" id="GO:0020037">
    <property type="term" value="F:heme binding"/>
    <property type="evidence" value="ECO:0007669"/>
    <property type="project" value="InterPro"/>
</dbReference>
<dbReference type="GO" id="GO:0046872">
    <property type="term" value="F:metal ion binding"/>
    <property type="evidence" value="ECO:0007669"/>
    <property type="project" value="UniProtKB-KW"/>
</dbReference>
<dbReference type="GO" id="GO:0070301">
    <property type="term" value="P:cellular response to hydrogen peroxide"/>
    <property type="evidence" value="ECO:0007669"/>
    <property type="project" value="TreeGrafter"/>
</dbReference>
<dbReference type="GO" id="GO:0042744">
    <property type="term" value="P:hydrogen peroxide catabolic process"/>
    <property type="evidence" value="ECO:0007669"/>
    <property type="project" value="UniProtKB-KW"/>
</dbReference>
<dbReference type="CDD" id="cd00649">
    <property type="entry name" value="catalase_peroxidase_1"/>
    <property type="match status" value="1"/>
</dbReference>
<dbReference type="CDD" id="cd08200">
    <property type="entry name" value="catalase_peroxidase_2"/>
    <property type="match status" value="1"/>
</dbReference>
<dbReference type="FunFam" id="1.10.420.10:FF:000002">
    <property type="entry name" value="Catalase-peroxidase"/>
    <property type="match status" value="1"/>
</dbReference>
<dbReference type="FunFam" id="1.10.420.10:FF:000004">
    <property type="entry name" value="Catalase-peroxidase"/>
    <property type="match status" value="1"/>
</dbReference>
<dbReference type="FunFam" id="1.10.520.10:FF:000002">
    <property type="entry name" value="Catalase-peroxidase"/>
    <property type="match status" value="1"/>
</dbReference>
<dbReference type="Gene3D" id="1.10.520.10">
    <property type="match status" value="2"/>
</dbReference>
<dbReference type="Gene3D" id="1.10.420.10">
    <property type="entry name" value="Peroxidase, domain 2"/>
    <property type="match status" value="2"/>
</dbReference>
<dbReference type="HAMAP" id="MF_01961">
    <property type="entry name" value="Catal_peroxid"/>
    <property type="match status" value="1"/>
</dbReference>
<dbReference type="InterPro" id="IPR000763">
    <property type="entry name" value="Catalase_peroxidase"/>
</dbReference>
<dbReference type="InterPro" id="IPR002016">
    <property type="entry name" value="Haem_peroxidase"/>
</dbReference>
<dbReference type="InterPro" id="IPR010255">
    <property type="entry name" value="Haem_peroxidase_sf"/>
</dbReference>
<dbReference type="InterPro" id="IPR019794">
    <property type="entry name" value="Peroxidases_AS"/>
</dbReference>
<dbReference type="InterPro" id="IPR019793">
    <property type="entry name" value="Peroxidases_heam-ligand_BS"/>
</dbReference>
<dbReference type="NCBIfam" id="TIGR00198">
    <property type="entry name" value="cat_per_HPI"/>
    <property type="match status" value="1"/>
</dbReference>
<dbReference type="NCBIfam" id="NF011635">
    <property type="entry name" value="PRK15061.1"/>
    <property type="match status" value="1"/>
</dbReference>
<dbReference type="PANTHER" id="PTHR30555:SF0">
    <property type="entry name" value="CATALASE-PEROXIDASE"/>
    <property type="match status" value="1"/>
</dbReference>
<dbReference type="PANTHER" id="PTHR30555">
    <property type="entry name" value="HYDROPEROXIDASE I, BIFUNCTIONAL CATALASE-PEROXIDASE"/>
    <property type="match status" value="1"/>
</dbReference>
<dbReference type="Pfam" id="PF00141">
    <property type="entry name" value="peroxidase"/>
    <property type="match status" value="2"/>
</dbReference>
<dbReference type="PRINTS" id="PR00460">
    <property type="entry name" value="BPEROXIDASE"/>
</dbReference>
<dbReference type="PRINTS" id="PR00458">
    <property type="entry name" value="PEROXIDASE"/>
</dbReference>
<dbReference type="SUPFAM" id="SSF48113">
    <property type="entry name" value="Heme-dependent peroxidases"/>
    <property type="match status" value="2"/>
</dbReference>
<dbReference type="PROSITE" id="PS00435">
    <property type="entry name" value="PEROXIDASE_1"/>
    <property type="match status" value="1"/>
</dbReference>
<dbReference type="PROSITE" id="PS00436">
    <property type="entry name" value="PEROXIDASE_2"/>
    <property type="match status" value="1"/>
</dbReference>
<dbReference type="PROSITE" id="PS50873">
    <property type="entry name" value="PEROXIDASE_4"/>
    <property type="match status" value="1"/>
</dbReference>
<protein>
    <recommendedName>
        <fullName evidence="1">Catalase-peroxidase</fullName>
        <shortName evidence="1">CP</shortName>
        <ecNumber evidence="1">1.11.1.21</ecNumber>
    </recommendedName>
    <alternativeName>
        <fullName evidence="1">Peroxidase/catalase</fullName>
    </alternativeName>
</protein>
<accession>A1C8R3</accession>